<comment type="subcellular location">
    <subcellularLocation>
        <location evidence="1">Cell membrane</location>
        <topology evidence="1">Lipid-anchor</topology>
    </subcellularLocation>
</comment>
<comment type="similarity">
    <text evidence="2">Belongs to the staphylococcal tandem lipoprotein family.</text>
</comment>
<proteinExistence type="inferred from homology"/>
<feature type="signal peptide" evidence="1">
    <location>
        <begin position="1"/>
        <end position="23"/>
    </location>
</feature>
<feature type="chain" id="PRO_0000282134" description="Uncharacterized lipoprotein SA0094">
    <location>
        <begin position="24"/>
        <end position="255"/>
    </location>
</feature>
<feature type="lipid moiety-binding region" description="N-palmitoyl cysteine" evidence="1">
    <location>
        <position position="24"/>
    </location>
</feature>
<feature type="lipid moiety-binding region" description="S-diacylglycerol cysteine" evidence="1">
    <location>
        <position position="24"/>
    </location>
</feature>
<reference key="1">
    <citation type="journal article" date="2001" name="Lancet">
        <title>Whole genome sequencing of meticillin-resistant Staphylococcus aureus.</title>
        <authorList>
            <person name="Kuroda M."/>
            <person name="Ohta T."/>
            <person name="Uchiyama I."/>
            <person name="Baba T."/>
            <person name="Yuzawa H."/>
            <person name="Kobayashi I."/>
            <person name="Cui L."/>
            <person name="Oguchi A."/>
            <person name="Aoki K."/>
            <person name="Nagai Y."/>
            <person name="Lian J.-Q."/>
            <person name="Ito T."/>
            <person name="Kanamori M."/>
            <person name="Matsumaru H."/>
            <person name="Maruyama A."/>
            <person name="Murakami H."/>
            <person name="Hosoyama A."/>
            <person name="Mizutani-Ui Y."/>
            <person name="Takahashi N.K."/>
            <person name="Sawano T."/>
            <person name="Inoue R."/>
            <person name="Kaito C."/>
            <person name="Sekimizu K."/>
            <person name="Hirakawa H."/>
            <person name="Kuhara S."/>
            <person name="Goto S."/>
            <person name="Yabuzaki J."/>
            <person name="Kanehisa M."/>
            <person name="Yamashita A."/>
            <person name="Oshima K."/>
            <person name="Furuya K."/>
            <person name="Yoshino C."/>
            <person name="Shiba T."/>
            <person name="Hattori M."/>
            <person name="Ogasawara N."/>
            <person name="Hayashi H."/>
            <person name="Hiramatsu K."/>
        </authorList>
    </citation>
    <scope>NUCLEOTIDE SEQUENCE [LARGE SCALE GENOMIC DNA]</scope>
    <source>
        <strain>N315</strain>
    </source>
</reference>
<gene>
    <name type="ordered locus">SA0094</name>
</gene>
<organism>
    <name type="scientific">Staphylococcus aureus (strain N315)</name>
    <dbReference type="NCBI Taxonomy" id="158879"/>
    <lineage>
        <taxon>Bacteria</taxon>
        <taxon>Bacillati</taxon>
        <taxon>Bacillota</taxon>
        <taxon>Bacilli</taxon>
        <taxon>Bacillales</taxon>
        <taxon>Staphylococcaceae</taxon>
        <taxon>Staphylococcus</taxon>
    </lineage>
</organism>
<accession>Q7A885</accession>
<evidence type="ECO:0000255" key="1">
    <source>
        <dbReference type="PROSITE-ProRule" id="PRU00303"/>
    </source>
</evidence>
<evidence type="ECO:0000305" key="2"/>
<dbReference type="EMBL" id="BA000018">
    <property type="protein sequence ID" value="BAB41313.1"/>
    <property type="molecule type" value="Genomic_DNA"/>
</dbReference>
<dbReference type="PIR" id="F89769">
    <property type="entry name" value="F89769"/>
</dbReference>
<dbReference type="SMR" id="Q7A885"/>
<dbReference type="EnsemblBacteria" id="BAB41313">
    <property type="protein sequence ID" value="BAB41313"/>
    <property type="gene ID" value="BAB41313"/>
</dbReference>
<dbReference type="KEGG" id="sau:SA0094"/>
<dbReference type="HOGENOM" id="CLU_071589_0_1_9"/>
<dbReference type="GO" id="GO:0005886">
    <property type="term" value="C:plasma membrane"/>
    <property type="evidence" value="ECO:0007669"/>
    <property type="project" value="UniProtKB-SubCell"/>
</dbReference>
<dbReference type="Gene3D" id="2.50.20.40">
    <property type="match status" value="1"/>
</dbReference>
<dbReference type="InterPro" id="IPR007595">
    <property type="entry name" value="Csa"/>
</dbReference>
<dbReference type="InterPro" id="IPR038641">
    <property type="entry name" value="Csa_sf"/>
</dbReference>
<dbReference type="NCBIfam" id="TIGR01742">
    <property type="entry name" value="SA_tandem_lipo"/>
    <property type="match status" value="1"/>
</dbReference>
<dbReference type="Pfam" id="PF04507">
    <property type="entry name" value="DUF576"/>
    <property type="match status" value="1"/>
</dbReference>
<dbReference type="PROSITE" id="PS51257">
    <property type="entry name" value="PROKAR_LIPOPROTEIN"/>
    <property type="match status" value="1"/>
</dbReference>
<name>Y094_STAAN</name>
<protein>
    <recommendedName>
        <fullName>Uncharacterized lipoprotein SA0094</fullName>
    </recommendedName>
</protein>
<sequence>MKRLNTLVLYISFLILIISIVAGCGTGKEAEIKKSFEKTLSMYPIKNLEDLYDKEGYRDDEFDKNDKGTWTISSEMAIQKKGEALNIKGMVLKLNRNTRSAKGFYYVNAIKKDENGRPQDKQIEYPVKMIDNKIIPTKDIKDEKIKKEIENFKFFAQYGNFKDLTKYKGGDISYNPEAPIYSAKYQLTNDDYNVKQLRKRYDIPTNKAPKLLLKGSGNLDGSSIGYKKIEFTFVEKKGENTYFTANLHFKPSNDE</sequence>
<keyword id="KW-1003">Cell membrane</keyword>
<keyword id="KW-0449">Lipoprotein</keyword>
<keyword id="KW-0472">Membrane</keyword>
<keyword id="KW-0564">Palmitate</keyword>
<keyword id="KW-0732">Signal</keyword>